<evidence type="ECO:0000250" key="1">
    <source>
        <dbReference type="UniProtKB" id="E9RAH5"/>
    </source>
</evidence>
<evidence type="ECO:0000269" key="2">
    <source>
    </source>
</evidence>
<evidence type="ECO:0000303" key="3">
    <source>
    </source>
</evidence>
<evidence type="ECO:0000305" key="4"/>
<evidence type="ECO:0000305" key="5">
    <source>
    </source>
</evidence>
<dbReference type="EC" id="1.8.1.-" evidence="5"/>
<dbReference type="EMBL" id="CAGA01000011">
    <property type="protein sequence ID" value="CCE28990.1"/>
    <property type="molecule type" value="Genomic_DNA"/>
</dbReference>
<dbReference type="SMR" id="M1W428"/>
<dbReference type="STRING" id="1111077.M1W428"/>
<dbReference type="VEuPathDB" id="FungiDB:CPUR_02681"/>
<dbReference type="eggNOG" id="ENOG502S1DJ">
    <property type="taxonomic scope" value="Eukaryota"/>
</dbReference>
<dbReference type="HOGENOM" id="CLU_031864_5_0_1"/>
<dbReference type="OrthoDB" id="10260355at2759"/>
<dbReference type="PhylomeDB" id="M1W428"/>
<dbReference type="Proteomes" id="UP000016801">
    <property type="component" value="Unassembled WGS sequence"/>
</dbReference>
<dbReference type="GO" id="GO:0016491">
    <property type="term" value="F:oxidoreductase activity"/>
    <property type="evidence" value="ECO:0007669"/>
    <property type="project" value="UniProtKB-KW"/>
</dbReference>
<dbReference type="GO" id="GO:0097237">
    <property type="term" value="P:cellular response to toxic substance"/>
    <property type="evidence" value="ECO:0007669"/>
    <property type="project" value="UniProtKB-ARBA"/>
</dbReference>
<dbReference type="Gene3D" id="3.50.50.60">
    <property type="entry name" value="FAD/NAD(P)-binding domain"/>
    <property type="match status" value="2"/>
</dbReference>
<dbReference type="InterPro" id="IPR036188">
    <property type="entry name" value="FAD/NAD-bd_sf"/>
</dbReference>
<dbReference type="InterPro" id="IPR023753">
    <property type="entry name" value="FAD/NAD-binding_dom"/>
</dbReference>
<dbReference type="InterPro" id="IPR050097">
    <property type="entry name" value="Ferredoxin-NADP_redctase_2"/>
</dbReference>
<dbReference type="PANTHER" id="PTHR48105">
    <property type="entry name" value="THIOREDOXIN REDUCTASE 1-RELATED-RELATED"/>
    <property type="match status" value="1"/>
</dbReference>
<dbReference type="Pfam" id="PF07992">
    <property type="entry name" value="Pyr_redox_2"/>
    <property type="match status" value="1"/>
</dbReference>
<dbReference type="PRINTS" id="PR00368">
    <property type="entry name" value="FADPNR"/>
</dbReference>
<dbReference type="PRINTS" id="PR00469">
    <property type="entry name" value="PNDRDTASEII"/>
</dbReference>
<dbReference type="SUPFAM" id="SSF51905">
    <property type="entry name" value="FAD/NAD(P)-binding domain"/>
    <property type="match status" value="1"/>
</dbReference>
<name>TCPT_CLAP2</name>
<sequence length="321" mass="33910">MSTSNIVDALIIGGGPAGLSAALAFARQNQSAIVFDSGRYRNAATDYMHLIPGLDHKAPAEFRATARSQITDRYDKIRILEGVDIVAAKKTDADSFELSDEAGQTWNGRKLILATGVEDVMLDIPGYAELWGKSIVHCLYCKGYEQRGGSAGVLAVGPLGNVNMALHIARQETALSKRVTLYSNGNESLAGELVSAFGSATAMRTDARKIKEFVAGADGKGVAIRFEDGSEVVEDYLAHQAPVKAREGLADLLGLEKGPNGEVKVSSPFQQASVRGVFAAGDNGAMLKNVPNAVFSGHVAGQMASTQLLADLNGQKSIFPI</sequence>
<keyword id="KW-1015">Disulfide bond</keyword>
<keyword id="KW-0274">FAD</keyword>
<keyword id="KW-0285">Flavoprotein</keyword>
<keyword id="KW-0521">NADP</keyword>
<keyword id="KW-0560">Oxidoreductase</keyword>
<keyword id="KW-0676">Redox-active center</keyword>
<keyword id="KW-1185">Reference proteome</keyword>
<comment type="function">
    <text evidence="2">Thioredoxin reductase; part of the gene cluster that mediates the biosynthesis of an unusual class of epipolythiodioxopiperazines (ETPs) lacking the reactive thiol group important for toxicity (PubMed:27390873). Firstly, L-tyrosine is prenylated by tcpD, before undergoing condensation with L-glycine in a reaction catalyzed by the NRPS tcpP leading to the diketopiperazine (DKP) backbone (PubMed:27390873). Afterwards the alpha-carbon of tyrosine is oxidized by the cytochrome P450 tcpC to form a hydroxyl group (PubMed:27390873). However, in contrast other ETP biosynthesis pathways studied so far, tcpC is not able to bishydroxylate the DKP at both alpha-carbon positions, but hydroxylates the alpha-carbon of the tyrosine part and the nitrogen of the glycine part (PubMed:27390873). The next steps involve an alpha,beta-elimination reaction catalyzed by tcpI, a methylation by the methyltransferase tcpN the action of the four enzyme cascade tcpG/K/J/I (PubMed:27390873). Due to a dysfunctional cytochrome P450 monooxygenase tcpC, the pathway leads to the biosynthesis of probable non-toxic metabolites lacking the reactive thiol group (PubMed:27390873).</text>
</comment>
<comment type="cofactor">
    <cofactor evidence="1">
        <name>FAD</name>
        <dbReference type="ChEBI" id="CHEBI:57692"/>
    </cofactor>
    <text evidence="1">Binds 1 FAD per subunit.</text>
</comment>
<comment type="pathway">
    <text evidence="5">Secondary metabolite biosynthesis.</text>
</comment>
<comment type="subunit">
    <text evidence="1">Homodimer (By similarity).</text>
</comment>
<comment type="induction">
    <text evidence="2">Expression is positively regulated by the thioclapurine cluster-specific transcription factor tcpZ (PubMed:27390873).</text>
</comment>
<comment type="similarity">
    <text evidence="4">Belongs to the class-II pyridine nucleotide-disulfide oxidoreductase family.</text>
</comment>
<feature type="chain" id="PRO_0000437712" description="Thioredoxin reductase tcpT">
    <location>
        <begin position="1"/>
        <end position="321"/>
    </location>
</feature>
<feature type="binding site" evidence="1">
    <location>
        <begin position="14"/>
        <end position="17"/>
    </location>
    <ligand>
        <name>FAD</name>
        <dbReference type="ChEBI" id="CHEBI:57692"/>
    </ligand>
</feature>
<feature type="binding site" evidence="1">
    <location>
        <begin position="36"/>
        <end position="41"/>
    </location>
    <ligand>
        <name>FAD</name>
        <dbReference type="ChEBI" id="CHEBI:57692"/>
    </ligand>
</feature>
<feature type="binding site" evidence="1">
    <location>
        <position position="49"/>
    </location>
    <ligand>
        <name>FAD</name>
        <dbReference type="ChEBI" id="CHEBI:57692"/>
    </ligand>
</feature>
<feature type="binding site" evidence="1">
    <location>
        <position position="114"/>
    </location>
    <ligand>
        <name>FAD</name>
        <dbReference type="ChEBI" id="CHEBI:57692"/>
    </ligand>
</feature>
<feature type="binding site" evidence="1">
    <location>
        <position position="282"/>
    </location>
    <ligand>
        <name>FAD</name>
        <dbReference type="ChEBI" id="CHEBI:57692"/>
    </ligand>
</feature>
<feature type="binding site" evidence="1">
    <location>
        <begin position="289"/>
        <end position="290"/>
    </location>
    <ligand>
        <name>FAD</name>
        <dbReference type="ChEBI" id="CHEBI:57692"/>
    </ligand>
</feature>
<feature type="disulfide bond" description="Redox-active" evidence="1">
    <location>
        <begin position="138"/>
        <end position="141"/>
    </location>
</feature>
<reference key="1">
    <citation type="journal article" date="2013" name="PLoS Genet.">
        <title>Plant-symbiotic fungi as chemical engineers: Multi-genome analysis of the Clavicipitaceae reveals dynamics of alkaloid loci.</title>
        <authorList>
            <person name="Schardl C.L."/>
            <person name="Young C.A."/>
            <person name="Hesse U."/>
            <person name="Amyotte S.G."/>
            <person name="Andreeva K."/>
            <person name="Calie P.J."/>
            <person name="Fleetwood D.J."/>
            <person name="Haws D.C."/>
            <person name="Moore N."/>
            <person name="Oeser B."/>
            <person name="Panaccione D.G."/>
            <person name="Schweri K.K."/>
            <person name="Voisey C.R."/>
            <person name="Farman M.L."/>
            <person name="Jaromczyk J.W."/>
            <person name="Roe B.A."/>
            <person name="O'Sullivan D.M."/>
            <person name="Scott B."/>
            <person name="Tudzynski P."/>
            <person name="An Z."/>
            <person name="Arnaoudova E.G."/>
            <person name="Bullock C.T."/>
            <person name="Charlton N.D."/>
            <person name="Chen L."/>
            <person name="Cox M."/>
            <person name="Dinkins R.D."/>
            <person name="Florea S."/>
            <person name="Glenn A.E."/>
            <person name="Gordon A."/>
            <person name="Gueldener U."/>
            <person name="Harris D.R."/>
            <person name="Hollin W."/>
            <person name="Jaromczyk J."/>
            <person name="Johnson R.D."/>
            <person name="Khan A.K."/>
            <person name="Leistner E."/>
            <person name="Leuchtmann A."/>
            <person name="Li C."/>
            <person name="Liu J."/>
            <person name="Liu J."/>
            <person name="Liu M."/>
            <person name="Mace W."/>
            <person name="Machado C."/>
            <person name="Nagabhyru P."/>
            <person name="Pan J."/>
            <person name="Schmid J."/>
            <person name="Sugawara K."/>
            <person name="Steiner U."/>
            <person name="Takach J.E."/>
            <person name="Tanaka E."/>
            <person name="Webb J.S."/>
            <person name="Wilson E.V."/>
            <person name="Wiseman J.L."/>
            <person name="Yoshida R."/>
            <person name="Zeng Z."/>
        </authorList>
    </citation>
    <scope>NUCLEOTIDE SEQUENCE [LARGE SCALE GENOMIC DNA]</scope>
    <source>
        <strain>20.1</strain>
    </source>
</reference>
<reference key="2">
    <citation type="journal article" date="2016" name="PLoS ONE">
        <title>The epipolythiodiketopiperazine gene cluster in Claviceps purpurea: dysfunctional cytochrome P450 enzyme prevents formation of the previously unknown clapurines.</title>
        <authorList>
            <person name="Dopstadt J."/>
            <person name="Neubauer L."/>
            <person name="Tudzynski P."/>
            <person name="Humpf H.U."/>
        </authorList>
    </citation>
    <scope>FUNCTION</scope>
    <scope>INDUCTION</scope>
</reference>
<accession>M1W428</accession>
<protein>
    <recommendedName>
        <fullName evidence="3">Thioredoxin reductase tcpT</fullName>
        <ecNumber evidence="5">1.8.1.-</ecNumber>
    </recommendedName>
    <alternativeName>
        <fullName evidence="3">Thioclapurine biosynthesis protein T</fullName>
    </alternativeName>
</protein>
<gene>
    <name evidence="3" type="primary">tcpT</name>
    <name type="ORF">CPUR_02681</name>
</gene>
<organism>
    <name type="scientific">Claviceps purpurea (strain 20.1)</name>
    <name type="common">Ergot fungus</name>
    <name type="synonym">Sphacelia segetum</name>
    <dbReference type="NCBI Taxonomy" id="1111077"/>
    <lineage>
        <taxon>Eukaryota</taxon>
        <taxon>Fungi</taxon>
        <taxon>Dikarya</taxon>
        <taxon>Ascomycota</taxon>
        <taxon>Pezizomycotina</taxon>
        <taxon>Sordariomycetes</taxon>
        <taxon>Hypocreomycetidae</taxon>
        <taxon>Hypocreales</taxon>
        <taxon>Clavicipitaceae</taxon>
        <taxon>Claviceps</taxon>
    </lineage>
</organism>
<proteinExistence type="evidence at transcript level"/>